<evidence type="ECO:0000255" key="1">
    <source>
        <dbReference type="HAMAP-Rule" id="MF_01113"/>
    </source>
</evidence>
<feature type="chain" id="PRO_1000084968" description="DNA polymerase IV">
    <location>
        <begin position="1"/>
        <end position="359"/>
    </location>
</feature>
<feature type="domain" description="UmuC" evidence="1">
    <location>
        <begin position="4"/>
        <end position="184"/>
    </location>
</feature>
<feature type="active site" evidence="1">
    <location>
        <position position="103"/>
    </location>
</feature>
<feature type="binding site" evidence="1">
    <location>
        <position position="8"/>
    </location>
    <ligand>
        <name>Mg(2+)</name>
        <dbReference type="ChEBI" id="CHEBI:18420"/>
    </ligand>
</feature>
<feature type="binding site" evidence="1">
    <location>
        <position position="102"/>
    </location>
    <ligand>
        <name>Mg(2+)</name>
        <dbReference type="ChEBI" id="CHEBI:18420"/>
    </ligand>
</feature>
<feature type="site" description="Substrate discrimination" evidence="1">
    <location>
        <position position="13"/>
    </location>
</feature>
<dbReference type="EC" id="2.7.7.7" evidence="1"/>
<dbReference type="EMBL" id="AM039952">
    <property type="protein sequence ID" value="CAJ25471.1"/>
    <property type="molecule type" value="Genomic_DNA"/>
</dbReference>
<dbReference type="RefSeq" id="WP_008571016.1">
    <property type="nucleotide sequence ID" value="NZ_CP017190.1"/>
</dbReference>
<dbReference type="SMR" id="Q3BP42"/>
<dbReference type="STRING" id="456327.BJD11_03965"/>
<dbReference type="GeneID" id="97511813"/>
<dbReference type="KEGG" id="xcv:XCV3740"/>
<dbReference type="eggNOG" id="COG0389">
    <property type="taxonomic scope" value="Bacteria"/>
</dbReference>
<dbReference type="HOGENOM" id="CLU_012348_1_2_6"/>
<dbReference type="Proteomes" id="UP000007069">
    <property type="component" value="Chromosome"/>
</dbReference>
<dbReference type="GO" id="GO:0005829">
    <property type="term" value="C:cytosol"/>
    <property type="evidence" value="ECO:0007669"/>
    <property type="project" value="TreeGrafter"/>
</dbReference>
<dbReference type="GO" id="GO:0003684">
    <property type="term" value="F:damaged DNA binding"/>
    <property type="evidence" value="ECO:0007669"/>
    <property type="project" value="InterPro"/>
</dbReference>
<dbReference type="GO" id="GO:0003887">
    <property type="term" value="F:DNA-directed DNA polymerase activity"/>
    <property type="evidence" value="ECO:0007669"/>
    <property type="project" value="UniProtKB-UniRule"/>
</dbReference>
<dbReference type="GO" id="GO:0000287">
    <property type="term" value="F:magnesium ion binding"/>
    <property type="evidence" value="ECO:0007669"/>
    <property type="project" value="UniProtKB-UniRule"/>
</dbReference>
<dbReference type="GO" id="GO:0006261">
    <property type="term" value="P:DNA-templated DNA replication"/>
    <property type="evidence" value="ECO:0007669"/>
    <property type="project" value="UniProtKB-UniRule"/>
</dbReference>
<dbReference type="GO" id="GO:0042276">
    <property type="term" value="P:error-prone translesion synthesis"/>
    <property type="evidence" value="ECO:0007669"/>
    <property type="project" value="TreeGrafter"/>
</dbReference>
<dbReference type="GO" id="GO:0009432">
    <property type="term" value="P:SOS response"/>
    <property type="evidence" value="ECO:0007669"/>
    <property type="project" value="TreeGrafter"/>
</dbReference>
<dbReference type="CDD" id="cd03586">
    <property type="entry name" value="PolY_Pol_IV_kappa"/>
    <property type="match status" value="1"/>
</dbReference>
<dbReference type="FunFam" id="1.10.150.20:FF:000019">
    <property type="entry name" value="DNA polymerase IV"/>
    <property type="match status" value="1"/>
</dbReference>
<dbReference type="FunFam" id="3.30.1490.100:FF:000004">
    <property type="entry name" value="DNA polymerase IV"/>
    <property type="match status" value="1"/>
</dbReference>
<dbReference type="FunFam" id="3.40.1170.60:FF:000001">
    <property type="entry name" value="DNA polymerase IV"/>
    <property type="match status" value="1"/>
</dbReference>
<dbReference type="Gene3D" id="3.30.70.270">
    <property type="match status" value="1"/>
</dbReference>
<dbReference type="Gene3D" id="3.40.1170.60">
    <property type="match status" value="1"/>
</dbReference>
<dbReference type="Gene3D" id="1.10.150.20">
    <property type="entry name" value="5' to 3' exonuclease, C-terminal subdomain"/>
    <property type="match status" value="1"/>
</dbReference>
<dbReference type="Gene3D" id="3.30.1490.100">
    <property type="entry name" value="DNA polymerase, Y-family, little finger domain"/>
    <property type="match status" value="1"/>
</dbReference>
<dbReference type="HAMAP" id="MF_01113">
    <property type="entry name" value="DNApol_IV"/>
    <property type="match status" value="1"/>
</dbReference>
<dbReference type="InterPro" id="IPR043502">
    <property type="entry name" value="DNA/RNA_pol_sf"/>
</dbReference>
<dbReference type="InterPro" id="IPR036775">
    <property type="entry name" value="DNA_pol_Y-fam_lit_finger_sf"/>
</dbReference>
<dbReference type="InterPro" id="IPR017961">
    <property type="entry name" value="DNA_pol_Y-fam_little_finger"/>
</dbReference>
<dbReference type="InterPro" id="IPR050116">
    <property type="entry name" value="DNA_polymerase-Y"/>
</dbReference>
<dbReference type="InterPro" id="IPR022880">
    <property type="entry name" value="DNApol_IV"/>
</dbReference>
<dbReference type="InterPro" id="IPR053848">
    <property type="entry name" value="IMS_HHH_1"/>
</dbReference>
<dbReference type="InterPro" id="IPR043128">
    <property type="entry name" value="Rev_trsase/Diguanyl_cyclase"/>
</dbReference>
<dbReference type="InterPro" id="IPR001126">
    <property type="entry name" value="UmuC"/>
</dbReference>
<dbReference type="NCBIfam" id="NF002677">
    <property type="entry name" value="PRK02406.1"/>
    <property type="match status" value="1"/>
</dbReference>
<dbReference type="PANTHER" id="PTHR11076:SF33">
    <property type="entry name" value="DNA POLYMERASE KAPPA"/>
    <property type="match status" value="1"/>
</dbReference>
<dbReference type="PANTHER" id="PTHR11076">
    <property type="entry name" value="DNA REPAIR POLYMERASE UMUC / TRANSFERASE FAMILY MEMBER"/>
    <property type="match status" value="1"/>
</dbReference>
<dbReference type="Pfam" id="PF00817">
    <property type="entry name" value="IMS"/>
    <property type="match status" value="1"/>
</dbReference>
<dbReference type="Pfam" id="PF11799">
    <property type="entry name" value="IMS_C"/>
    <property type="match status" value="1"/>
</dbReference>
<dbReference type="Pfam" id="PF21999">
    <property type="entry name" value="IMS_HHH_1"/>
    <property type="match status" value="1"/>
</dbReference>
<dbReference type="SUPFAM" id="SSF56672">
    <property type="entry name" value="DNA/RNA polymerases"/>
    <property type="match status" value="1"/>
</dbReference>
<dbReference type="SUPFAM" id="SSF100879">
    <property type="entry name" value="Lesion bypass DNA polymerase (Y-family), little finger domain"/>
    <property type="match status" value="1"/>
</dbReference>
<dbReference type="PROSITE" id="PS50173">
    <property type="entry name" value="UMUC"/>
    <property type="match status" value="1"/>
</dbReference>
<organism>
    <name type="scientific">Xanthomonas euvesicatoria pv. vesicatoria (strain 85-10)</name>
    <name type="common">Xanthomonas campestris pv. vesicatoria</name>
    <dbReference type="NCBI Taxonomy" id="316273"/>
    <lineage>
        <taxon>Bacteria</taxon>
        <taxon>Pseudomonadati</taxon>
        <taxon>Pseudomonadota</taxon>
        <taxon>Gammaproteobacteria</taxon>
        <taxon>Lysobacterales</taxon>
        <taxon>Lysobacteraceae</taxon>
        <taxon>Xanthomonas</taxon>
    </lineage>
</organism>
<accession>Q3BP42</accession>
<proteinExistence type="inferred from homology"/>
<sequence>MRKIVHVDMDAFYASVEQRDDPGLRGKPVVVAWRGARSVVCAASYEARTFGIRSAMPAVRAERLCPDAIFVPPDFARYKAVSRQVREIFHRHTDLVEPLSLDEAYLDVTHAKTGMQLATEVAQLIRTQIREETQLTASAGIAPNKFLAKIASDWRKPDGQFVIAPSRVDAFLLPLKVNRIPGVGKVMDGKLAALGIVTVADLRQRPLEELQAHFGSFGQSLYRRARGIDERPVEPDQEVQSVSSEDTFSEDLALDALDPHILRLAEKTWLATRRTERIGRTVVLKLKTSNFRILTRSYTPEQPPTSQEALAQIALALTRRVELPTQTRYRLVGVGLSGFSDVEDGAVQGQLFGQMPPLE</sequence>
<comment type="function">
    <text evidence="1">Poorly processive, error-prone DNA polymerase involved in untargeted mutagenesis. Copies undamaged DNA at stalled replication forks, which arise in vivo from mismatched or misaligned primer ends. These misaligned primers can be extended by PolIV. Exhibits no 3'-5' exonuclease (proofreading) activity. May be involved in translesional synthesis, in conjunction with the beta clamp from PolIII.</text>
</comment>
<comment type="catalytic activity">
    <reaction evidence="1">
        <text>DNA(n) + a 2'-deoxyribonucleoside 5'-triphosphate = DNA(n+1) + diphosphate</text>
        <dbReference type="Rhea" id="RHEA:22508"/>
        <dbReference type="Rhea" id="RHEA-COMP:17339"/>
        <dbReference type="Rhea" id="RHEA-COMP:17340"/>
        <dbReference type="ChEBI" id="CHEBI:33019"/>
        <dbReference type="ChEBI" id="CHEBI:61560"/>
        <dbReference type="ChEBI" id="CHEBI:173112"/>
        <dbReference type="EC" id="2.7.7.7"/>
    </reaction>
</comment>
<comment type="cofactor">
    <cofactor evidence="1">
        <name>Mg(2+)</name>
        <dbReference type="ChEBI" id="CHEBI:18420"/>
    </cofactor>
    <text evidence="1">Binds 2 magnesium ions per subunit.</text>
</comment>
<comment type="subunit">
    <text evidence="1">Monomer.</text>
</comment>
<comment type="subcellular location">
    <subcellularLocation>
        <location evidence="1">Cytoplasm</location>
    </subcellularLocation>
</comment>
<comment type="similarity">
    <text evidence="1">Belongs to the DNA polymerase type-Y family.</text>
</comment>
<protein>
    <recommendedName>
        <fullName evidence="1">DNA polymerase IV</fullName>
        <shortName evidence="1">Pol IV</shortName>
        <ecNumber evidence="1">2.7.7.7</ecNumber>
    </recommendedName>
</protein>
<reference key="1">
    <citation type="journal article" date="2005" name="J. Bacteriol.">
        <title>Insights into genome plasticity and pathogenicity of the plant pathogenic Bacterium Xanthomonas campestris pv. vesicatoria revealed by the complete genome sequence.</title>
        <authorList>
            <person name="Thieme F."/>
            <person name="Koebnik R."/>
            <person name="Bekel T."/>
            <person name="Berger C."/>
            <person name="Boch J."/>
            <person name="Buettner D."/>
            <person name="Caldana C."/>
            <person name="Gaigalat L."/>
            <person name="Goesmann A."/>
            <person name="Kay S."/>
            <person name="Kirchner O."/>
            <person name="Lanz C."/>
            <person name="Linke B."/>
            <person name="McHardy A.C."/>
            <person name="Meyer F."/>
            <person name="Mittenhuber G."/>
            <person name="Nies D.H."/>
            <person name="Niesbach-Kloesgen U."/>
            <person name="Patschkowski T."/>
            <person name="Rueckert C."/>
            <person name="Rupp O."/>
            <person name="Schneiker S."/>
            <person name="Schuster S.C."/>
            <person name="Vorhoelter F.J."/>
            <person name="Weber E."/>
            <person name="Puehler A."/>
            <person name="Bonas U."/>
            <person name="Bartels D."/>
            <person name="Kaiser O."/>
        </authorList>
    </citation>
    <scope>NUCLEOTIDE SEQUENCE [LARGE SCALE GENOMIC DNA]</scope>
    <source>
        <strain>85-10</strain>
    </source>
</reference>
<keyword id="KW-0963">Cytoplasm</keyword>
<keyword id="KW-0227">DNA damage</keyword>
<keyword id="KW-0234">DNA repair</keyword>
<keyword id="KW-0235">DNA replication</keyword>
<keyword id="KW-0238">DNA-binding</keyword>
<keyword id="KW-0239">DNA-directed DNA polymerase</keyword>
<keyword id="KW-0460">Magnesium</keyword>
<keyword id="KW-0479">Metal-binding</keyword>
<keyword id="KW-0515">Mutator protein</keyword>
<keyword id="KW-0548">Nucleotidyltransferase</keyword>
<keyword id="KW-0808">Transferase</keyword>
<name>DPO4_XANE5</name>
<gene>
    <name evidence="1" type="primary">dinB</name>
    <name type="ordered locus">XCV3740</name>
</gene>